<proteinExistence type="inferred from homology"/>
<comment type="function">
    <text evidence="1">One of the components of the core complex of photosystem II (PSII). PSII is a light-driven water:plastoquinone oxidoreductase that uses light energy to abstract electrons from H(2)O, generating O(2) and a proton gradient subsequently used for ATP formation. It consists of a core antenna complex that captures photons, and an electron transfer chain that converts photonic excitation into a charge separation. This subunit is found at the monomer-monomer interface and is required for correct PSII assembly and/or dimerization.</text>
</comment>
<comment type="subunit">
    <text evidence="1">PSII is composed of 1 copy each of membrane proteins PsbA, PsbB, PsbC, PsbD, PsbE, PsbF, PsbH, PsbI, PsbJ, PsbK, PsbL, PsbM, PsbT, PsbX, PsbY, PsbZ, Psb30/Ycf12, at least 3 peripheral proteins of the oxygen-evolving complex and a large number of cofactors. It forms dimeric complexes.</text>
</comment>
<comment type="subcellular location">
    <subcellularLocation>
        <location evidence="1">Plastid</location>
        <location evidence="1">Chloroplast thylakoid membrane</location>
        <topology evidence="1">Single-pass membrane protein</topology>
    </subcellularLocation>
</comment>
<comment type="similarity">
    <text evidence="1">Belongs to the PsbL family.</text>
</comment>
<evidence type="ECO:0000255" key="1">
    <source>
        <dbReference type="HAMAP-Rule" id="MF_01317"/>
    </source>
</evidence>
<geneLocation type="chloroplast"/>
<feature type="chain" id="PRO_0000306224" description="Photosystem II reaction center protein L">
    <location>
        <begin position="1"/>
        <end position="38"/>
    </location>
</feature>
<feature type="transmembrane region" description="Helical" evidence="1">
    <location>
        <begin position="17"/>
        <end position="37"/>
    </location>
</feature>
<sequence length="38" mass="4497">MTQSNPNEQNVELNRTSLYWGLLLIFVLAVLFSNYFFN</sequence>
<keyword id="KW-0150">Chloroplast</keyword>
<keyword id="KW-0472">Membrane</keyword>
<keyword id="KW-0602">Photosynthesis</keyword>
<keyword id="KW-0604">Photosystem II</keyword>
<keyword id="KW-0934">Plastid</keyword>
<keyword id="KW-0674">Reaction center</keyword>
<keyword id="KW-0793">Thylakoid</keyword>
<keyword id="KW-0812">Transmembrane</keyword>
<keyword id="KW-1133">Transmembrane helix</keyword>
<dbReference type="EMBL" id="EF380351">
    <property type="protein sequence ID" value="ABQ45264.1"/>
    <property type="molecule type" value="Genomic_DNA"/>
</dbReference>
<dbReference type="RefSeq" id="YP_001294199.1">
    <property type="nucleotide sequence ID" value="NC_009599.1"/>
</dbReference>
<dbReference type="SMR" id="A6MM51"/>
<dbReference type="GeneID" id="5236865"/>
<dbReference type="GO" id="GO:0009535">
    <property type="term" value="C:chloroplast thylakoid membrane"/>
    <property type="evidence" value="ECO:0007669"/>
    <property type="project" value="UniProtKB-SubCell"/>
</dbReference>
<dbReference type="GO" id="GO:0009539">
    <property type="term" value="C:photosystem II reaction center"/>
    <property type="evidence" value="ECO:0007669"/>
    <property type="project" value="InterPro"/>
</dbReference>
<dbReference type="GO" id="GO:0015979">
    <property type="term" value="P:photosynthesis"/>
    <property type="evidence" value="ECO:0007669"/>
    <property type="project" value="UniProtKB-UniRule"/>
</dbReference>
<dbReference type="HAMAP" id="MF_01317">
    <property type="entry name" value="PSII_PsbL"/>
    <property type="match status" value="1"/>
</dbReference>
<dbReference type="InterPro" id="IPR003372">
    <property type="entry name" value="PSII_PsbL"/>
</dbReference>
<dbReference type="InterPro" id="IPR037266">
    <property type="entry name" value="PSII_PsbL_sf"/>
</dbReference>
<dbReference type="NCBIfam" id="NF001972">
    <property type="entry name" value="PRK00753.1"/>
    <property type="match status" value="1"/>
</dbReference>
<dbReference type="Pfam" id="PF02419">
    <property type="entry name" value="PsbL"/>
    <property type="match status" value="1"/>
</dbReference>
<dbReference type="SUPFAM" id="SSF161017">
    <property type="entry name" value="Photosystem II reaction center protein L, PsbL"/>
    <property type="match status" value="1"/>
</dbReference>
<reference key="1">
    <citation type="journal article" date="2007" name="Mol. Phylogenet. Evol.">
        <title>Phylogenetic and evolutionary implications of complete chloroplast genome sequences of four early-diverging angiosperms: Buxus (Buxaceae), Chloranthus (Chloranthaceae), Dioscorea (Dioscoreaceae), and Illicium (Schisandraceae).</title>
        <authorList>
            <person name="Hansen D.R."/>
            <person name="Dastidar S.G."/>
            <person name="Cai Z."/>
            <person name="Penaflor C."/>
            <person name="Kuehl J.V."/>
            <person name="Boore J.L."/>
            <person name="Jansen R.K."/>
        </authorList>
    </citation>
    <scope>NUCLEOTIDE SEQUENCE [LARGE SCALE GENOMIC DNA]</scope>
</reference>
<protein>
    <recommendedName>
        <fullName evidence="1">Photosystem II reaction center protein L</fullName>
        <shortName evidence="1">PSII-L</shortName>
    </recommendedName>
</protein>
<accession>A6MM51</accession>
<organism>
    <name type="scientific">Buxus microphylla</name>
    <name type="common">Littleleaf boxwood</name>
    <name type="synonym">Japanese boxwood</name>
    <dbReference type="NCBI Taxonomy" id="153571"/>
    <lineage>
        <taxon>Eukaryota</taxon>
        <taxon>Viridiplantae</taxon>
        <taxon>Streptophyta</taxon>
        <taxon>Embryophyta</taxon>
        <taxon>Tracheophyta</taxon>
        <taxon>Spermatophyta</taxon>
        <taxon>Magnoliopsida</taxon>
        <taxon>Buxales</taxon>
        <taxon>Buxaceae</taxon>
        <taxon>Buxus</taxon>
    </lineage>
</organism>
<gene>
    <name evidence="1" type="primary">psbL</name>
</gene>
<name>PSBL_BUXMI</name>